<reference key="1">
    <citation type="journal article" date="2004" name="Proc. Natl. Acad. Sci. U.S.A.">
        <title>Genome sequence of the deep-sea gamma-proteobacterium Idiomarina loihiensis reveals amino acid fermentation as a source of carbon and energy.</title>
        <authorList>
            <person name="Hou S."/>
            <person name="Saw J.H."/>
            <person name="Lee K.S."/>
            <person name="Freitas T.A."/>
            <person name="Belisle C."/>
            <person name="Kawarabayasi Y."/>
            <person name="Donachie S.P."/>
            <person name="Pikina A."/>
            <person name="Galperin M.Y."/>
            <person name="Koonin E.V."/>
            <person name="Makarova K.S."/>
            <person name="Omelchenko M.V."/>
            <person name="Sorokin A."/>
            <person name="Wolf Y.I."/>
            <person name="Li Q.X."/>
            <person name="Keum Y.S."/>
            <person name="Campbell S."/>
            <person name="Denery J."/>
            <person name="Aizawa S."/>
            <person name="Shibata S."/>
            <person name="Malahoff A."/>
            <person name="Alam M."/>
        </authorList>
    </citation>
    <scope>NUCLEOTIDE SEQUENCE [LARGE SCALE GENOMIC DNA]</scope>
    <source>
        <strain>ATCC BAA-735 / DSM 15497 / L2-TR</strain>
    </source>
</reference>
<gene>
    <name evidence="1" type="primary">hemL</name>
    <name type="ordered locus">IL2245</name>
</gene>
<protein>
    <recommendedName>
        <fullName evidence="1">Glutamate-1-semialdehyde 2,1-aminomutase</fullName>
        <shortName evidence="1">GSA</shortName>
        <ecNumber evidence="1">5.4.3.8</ecNumber>
    </recommendedName>
    <alternativeName>
        <fullName evidence="1">Glutamate-1-semialdehyde aminotransferase</fullName>
        <shortName evidence="1">GSA-AT</shortName>
    </alternativeName>
</protein>
<organism>
    <name type="scientific">Idiomarina loihiensis (strain ATCC BAA-735 / DSM 15497 / L2-TR)</name>
    <dbReference type="NCBI Taxonomy" id="283942"/>
    <lineage>
        <taxon>Bacteria</taxon>
        <taxon>Pseudomonadati</taxon>
        <taxon>Pseudomonadota</taxon>
        <taxon>Gammaproteobacteria</taxon>
        <taxon>Alteromonadales</taxon>
        <taxon>Idiomarinaceae</taxon>
        <taxon>Idiomarina</taxon>
    </lineage>
</organism>
<evidence type="ECO:0000255" key="1">
    <source>
        <dbReference type="HAMAP-Rule" id="MF_00375"/>
    </source>
</evidence>
<comment type="catalytic activity">
    <reaction evidence="1">
        <text>(S)-4-amino-5-oxopentanoate = 5-aminolevulinate</text>
        <dbReference type="Rhea" id="RHEA:14265"/>
        <dbReference type="ChEBI" id="CHEBI:57501"/>
        <dbReference type="ChEBI" id="CHEBI:356416"/>
        <dbReference type="EC" id="5.4.3.8"/>
    </reaction>
</comment>
<comment type="cofactor">
    <cofactor evidence="1">
        <name>pyridoxal 5'-phosphate</name>
        <dbReference type="ChEBI" id="CHEBI:597326"/>
    </cofactor>
</comment>
<comment type="pathway">
    <text evidence="1">Porphyrin-containing compound metabolism; protoporphyrin-IX biosynthesis; 5-aminolevulinate from L-glutamyl-tRNA(Glu): step 2/2.</text>
</comment>
<comment type="subunit">
    <text evidence="1">Homodimer.</text>
</comment>
<comment type="subcellular location">
    <subcellularLocation>
        <location evidence="1">Cytoplasm</location>
    </subcellularLocation>
</comment>
<comment type="similarity">
    <text evidence="1">Belongs to the class-III pyridoxal-phosphate-dependent aminotransferase family. HemL subfamily.</text>
</comment>
<feature type="chain" id="PRO_0000243579" description="Glutamate-1-semialdehyde 2,1-aminomutase">
    <location>
        <begin position="1"/>
        <end position="427"/>
    </location>
</feature>
<feature type="modified residue" description="N6-(pyridoxal phosphate)lysine" evidence="1">
    <location>
        <position position="265"/>
    </location>
</feature>
<proteinExistence type="inferred from homology"/>
<dbReference type="EC" id="5.4.3.8" evidence="1"/>
<dbReference type="EMBL" id="AE017340">
    <property type="protein sequence ID" value="AAV83077.1"/>
    <property type="molecule type" value="Genomic_DNA"/>
</dbReference>
<dbReference type="RefSeq" id="WP_011235472.1">
    <property type="nucleotide sequence ID" value="NC_006512.1"/>
</dbReference>
<dbReference type="SMR" id="Q5QVP9"/>
<dbReference type="STRING" id="283942.IL2245"/>
<dbReference type="GeneID" id="41337434"/>
<dbReference type="KEGG" id="ilo:IL2245"/>
<dbReference type="eggNOG" id="COG0001">
    <property type="taxonomic scope" value="Bacteria"/>
</dbReference>
<dbReference type="HOGENOM" id="CLU_016922_1_5_6"/>
<dbReference type="OrthoDB" id="9801052at2"/>
<dbReference type="UniPathway" id="UPA00251">
    <property type="reaction ID" value="UER00317"/>
</dbReference>
<dbReference type="Proteomes" id="UP000001171">
    <property type="component" value="Chromosome"/>
</dbReference>
<dbReference type="GO" id="GO:0005737">
    <property type="term" value="C:cytoplasm"/>
    <property type="evidence" value="ECO:0007669"/>
    <property type="project" value="UniProtKB-SubCell"/>
</dbReference>
<dbReference type="GO" id="GO:0042286">
    <property type="term" value="F:glutamate-1-semialdehyde 2,1-aminomutase activity"/>
    <property type="evidence" value="ECO:0007669"/>
    <property type="project" value="UniProtKB-UniRule"/>
</dbReference>
<dbReference type="GO" id="GO:0030170">
    <property type="term" value="F:pyridoxal phosphate binding"/>
    <property type="evidence" value="ECO:0007669"/>
    <property type="project" value="InterPro"/>
</dbReference>
<dbReference type="GO" id="GO:0008483">
    <property type="term" value="F:transaminase activity"/>
    <property type="evidence" value="ECO:0007669"/>
    <property type="project" value="InterPro"/>
</dbReference>
<dbReference type="GO" id="GO:0006782">
    <property type="term" value="P:protoporphyrinogen IX biosynthetic process"/>
    <property type="evidence" value="ECO:0007669"/>
    <property type="project" value="UniProtKB-UniRule"/>
</dbReference>
<dbReference type="CDD" id="cd00610">
    <property type="entry name" value="OAT_like"/>
    <property type="match status" value="1"/>
</dbReference>
<dbReference type="FunFam" id="3.40.640.10:FF:000021">
    <property type="entry name" value="Glutamate-1-semialdehyde 2,1-aminomutase"/>
    <property type="match status" value="1"/>
</dbReference>
<dbReference type="Gene3D" id="3.90.1150.10">
    <property type="entry name" value="Aspartate Aminotransferase, domain 1"/>
    <property type="match status" value="1"/>
</dbReference>
<dbReference type="Gene3D" id="3.40.640.10">
    <property type="entry name" value="Type I PLP-dependent aspartate aminotransferase-like (Major domain)"/>
    <property type="match status" value="1"/>
</dbReference>
<dbReference type="HAMAP" id="MF_00375">
    <property type="entry name" value="HemL_aminotrans_3"/>
    <property type="match status" value="1"/>
</dbReference>
<dbReference type="InterPro" id="IPR004639">
    <property type="entry name" value="4pyrrol_synth_GluAld_NH2Trfase"/>
</dbReference>
<dbReference type="InterPro" id="IPR005814">
    <property type="entry name" value="Aminotrans_3"/>
</dbReference>
<dbReference type="InterPro" id="IPR049704">
    <property type="entry name" value="Aminotrans_3_PPA_site"/>
</dbReference>
<dbReference type="InterPro" id="IPR015424">
    <property type="entry name" value="PyrdxlP-dep_Trfase"/>
</dbReference>
<dbReference type="InterPro" id="IPR015421">
    <property type="entry name" value="PyrdxlP-dep_Trfase_major"/>
</dbReference>
<dbReference type="InterPro" id="IPR015422">
    <property type="entry name" value="PyrdxlP-dep_Trfase_small"/>
</dbReference>
<dbReference type="NCBIfam" id="TIGR00713">
    <property type="entry name" value="hemL"/>
    <property type="match status" value="1"/>
</dbReference>
<dbReference type="NCBIfam" id="NF000818">
    <property type="entry name" value="PRK00062.1"/>
    <property type="match status" value="1"/>
</dbReference>
<dbReference type="PANTHER" id="PTHR43713">
    <property type="entry name" value="GLUTAMATE-1-SEMIALDEHYDE 2,1-AMINOMUTASE"/>
    <property type="match status" value="1"/>
</dbReference>
<dbReference type="PANTHER" id="PTHR43713:SF3">
    <property type="entry name" value="GLUTAMATE-1-SEMIALDEHYDE 2,1-AMINOMUTASE 1, CHLOROPLASTIC-RELATED"/>
    <property type="match status" value="1"/>
</dbReference>
<dbReference type="Pfam" id="PF00202">
    <property type="entry name" value="Aminotran_3"/>
    <property type="match status" value="1"/>
</dbReference>
<dbReference type="SUPFAM" id="SSF53383">
    <property type="entry name" value="PLP-dependent transferases"/>
    <property type="match status" value="1"/>
</dbReference>
<dbReference type="PROSITE" id="PS00600">
    <property type="entry name" value="AA_TRANSFER_CLASS_3"/>
    <property type="match status" value="1"/>
</dbReference>
<accession>Q5QVP9</accession>
<sequence>MSRSEELYTKAQISIPGGVNSPVRAFNGVGGSPIFFESAEGAYMIDADGKRYIDYVGSWGPMILGHNHPAVLEATLQAAKRGLSFGTPTEVEITMAETIRKIVPSIEKVRMVNSGTEATMTAIRLARGYTGRDKILKFEGNYHGHADSLLVKAGSGALTLGVPNSPGIPEDFAKHTLTATYNDIESVKQIFAEMGDEIACIIVEPVAGNMNCIPPVDGFLEGLRSICDDHGSVLIFDEVMTGFRVAPGGAQDRYKIKPDLTTLGKVIGGGMPVGAFGGKKEVMDYIAPVGPVYQAGTLSGNPVAMAAGLAALQQLSTPGLYDQLYQRVDTLLDGLQERADRAGVPMTTNRAGSMFGFFFTEEPEVTTYAQATQCNMEHFKTFYHAMLEQGVYLAPSAFEGGFMSAAHSEEDIQNTLNAAEKAFAKLV</sequence>
<keyword id="KW-0963">Cytoplasm</keyword>
<keyword id="KW-0413">Isomerase</keyword>
<keyword id="KW-0627">Porphyrin biosynthesis</keyword>
<keyword id="KW-0663">Pyridoxal phosphate</keyword>
<keyword id="KW-1185">Reference proteome</keyword>
<name>GSA_IDILO</name>